<dbReference type="EMBL" id="AE016830">
    <property type="protein sequence ID" value="AAO80777.1"/>
    <property type="molecule type" value="Genomic_DNA"/>
</dbReference>
<dbReference type="RefSeq" id="NP_814707.1">
    <property type="nucleotide sequence ID" value="NC_004668.1"/>
</dbReference>
<dbReference type="RefSeq" id="WP_002355868.1">
    <property type="nucleotide sequence ID" value="NZ_KE136527.1"/>
</dbReference>
<dbReference type="PDB" id="6WU9">
    <property type="method" value="EM"/>
    <property type="resolution" value="2.90 A"/>
    <property type="chains" value="X=18-93"/>
</dbReference>
<dbReference type="PDB" id="7P7Q">
    <property type="method" value="EM"/>
    <property type="resolution" value="2.40 A"/>
    <property type="chains" value="Y=1-95"/>
</dbReference>
<dbReference type="PDB" id="7P7R">
    <property type="method" value="EM"/>
    <property type="resolution" value="2.90 A"/>
    <property type="chains" value="Y=1-95"/>
</dbReference>
<dbReference type="PDBsum" id="6WU9"/>
<dbReference type="PDBsum" id="7P7Q"/>
<dbReference type="PDBsum" id="7P7R"/>
<dbReference type="EMDB" id="EMD-13241"/>
<dbReference type="EMDB" id="EMD-13242"/>
<dbReference type="SMR" id="Q836X4"/>
<dbReference type="STRING" id="226185.EF_0970"/>
<dbReference type="EnsemblBacteria" id="AAO80777">
    <property type="protein sequence ID" value="AAO80777"/>
    <property type="gene ID" value="EF_0970"/>
</dbReference>
<dbReference type="GeneID" id="60893305"/>
<dbReference type="KEGG" id="efa:EF0970"/>
<dbReference type="PATRIC" id="fig|226185.45.peg.3177"/>
<dbReference type="eggNOG" id="COG0211">
    <property type="taxonomic scope" value="Bacteria"/>
</dbReference>
<dbReference type="HOGENOM" id="CLU_095424_4_0_9"/>
<dbReference type="Proteomes" id="UP000001415">
    <property type="component" value="Chromosome"/>
</dbReference>
<dbReference type="GO" id="GO:0022625">
    <property type="term" value="C:cytosolic large ribosomal subunit"/>
    <property type="evidence" value="ECO:0007669"/>
    <property type="project" value="TreeGrafter"/>
</dbReference>
<dbReference type="GO" id="GO:0003735">
    <property type="term" value="F:structural constituent of ribosome"/>
    <property type="evidence" value="ECO:0007669"/>
    <property type="project" value="InterPro"/>
</dbReference>
<dbReference type="GO" id="GO:0006412">
    <property type="term" value="P:translation"/>
    <property type="evidence" value="ECO:0007669"/>
    <property type="project" value="UniProtKB-UniRule"/>
</dbReference>
<dbReference type="FunFam" id="2.40.50.100:FF:000004">
    <property type="entry name" value="50S ribosomal protein L27"/>
    <property type="match status" value="1"/>
</dbReference>
<dbReference type="Gene3D" id="2.40.50.100">
    <property type="match status" value="1"/>
</dbReference>
<dbReference type="HAMAP" id="MF_00539">
    <property type="entry name" value="Ribosomal_bL27"/>
    <property type="match status" value="1"/>
</dbReference>
<dbReference type="InterPro" id="IPR001684">
    <property type="entry name" value="Ribosomal_bL27"/>
</dbReference>
<dbReference type="InterPro" id="IPR018261">
    <property type="entry name" value="Ribosomal_bL27_CS"/>
</dbReference>
<dbReference type="NCBIfam" id="TIGR00062">
    <property type="entry name" value="L27"/>
    <property type="match status" value="1"/>
</dbReference>
<dbReference type="PANTHER" id="PTHR15893:SF0">
    <property type="entry name" value="LARGE RIBOSOMAL SUBUNIT PROTEIN BL27M"/>
    <property type="match status" value="1"/>
</dbReference>
<dbReference type="PANTHER" id="PTHR15893">
    <property type="entry name" value="RIBOSOMAL PROTEIN L27"/>
    <property type="match status" value="1"/>
</dbReference>
<dbReference type="Pfam" id="PF01016">
    <property type="entry name" value="Ribosomal_L27"/>
    <property type="match status" value="1"/>
</dbReference>
<dbReference type="PRINTS" id="PR00063">
    <property type="entry name" value="RIBOSOMALL27"/>
</dbReference>
<dbReference type="SUPFAM" id="SSF110324">
    <property type="entry name" value="Ribosomal L27 protein-like"/>
    <property type="match status" value="1"/>
</dbReference>
<dbReference type="PROSITE" id="PS00831">
    <property type="entry name" value="RIBOSOMAL_L27"/>
    <property type="match status" value="1"/>
</dbReference>
<reference key="1">
    <citation type="journal article" date="2003" name="Science">
        <title>Role of mobile DNA in the evolution of vancomycin-resistant Enterococcus faecalis.</title>
        <authorList>
            <person name="Paulsen I.T."/>
            <person name="Banerjei L."/>
            <person name="Myers G.S.A."/>
            <person name="Nelson K.E."/>
            <person name="Seshadri R."/>
            <person name="Read T.D."/>
            <person name="Fouts D.E."/>
            <person name="Eisen J.A."/>
            <person name="Gill S.R."/>
            <person name="Heidelberg J.F."/>
            <person name="Tettelin H."/>
            <person name="Dodson R.J."/>
            <person name="Umayam L.A."/>
            <person name="Brinkac L.M."/>
            <person name="Beanan M.J."/>
            <person name="Daugherty S.C."/>
            <person name="DeBoy R.T."/>
            <person name="Durkin S.A."/>
            <person name="Kolonay J.F."/>
            <person name="Madupu R."/>
            <person name="Nelson W.C."/>
            <person name="Vamathevan J.J."/>
            <person name="Tran B."/>
            <person name="Upton J."/>
            <person name="Hansen T."/>
            <person name="Shetty J."/>
            <person name="Khouri H.M."/>
            <person name="Utterback T.R."/>
            <person name="Radune D."/>
            <person name="Ketchum K.A."/>
            <person name="Dougherty B.A."/>
            <person name="Fraser C.M."/>
        </authorList>
    </citation>
    <scope>NUCLEOTIDE SEQUENCE [LARGE SCALE GENOMIC DNA]</scope>
    <source>
        <strain>ATCC 700802 / V583</strain>
    </source>
</reference>
<feature type="propeptide" id="PRO_0000459892" evidence="1">
    <location>
        <begin position="1"/>
        <end position="10"/>
    </location>
</feature>
<feature type="chain" id="PRO_0000181088" description="Large ribosomal subunit protein bL27">
    <location>
        <begin position="11"/>
        <end position="95"/>
    </location>
</feature>
<feature type="region of interest" description="Disordered" evidence="3">
    <location>
        <begin position="12"/>
        <end position="38"/>
    </location>
</feature>
<feature type="strand" evidence="5">
    <location>
        <begin position="31"/>
        <end position="34"/>
    </location>
</feature>
<feature type="strand" evidence="5">
    <location>
        <begin position="45"/>
        <end position="48"/>
    </location>
</feature>
<feature type="strand" evidence="5">
    <location>
        <begin position="53"/>
        <end position="56"/>
    </location>
</feature>
<feature type="strand" evidence="5">
    <location>
        <begin position="60"/>
        <end position="62"/>
    </location>
</feature>
<feature type="strand" evidence="5">
    <location>
        <begin position="68"/>
        <end position="81"/>
    </location>
</feature>
<feature type="turn" evidence="5">
    <location>
        <begin position="82"/>
        <end position="84"/>
    </location>
</feature>
<feature type="strand" evidence="5">
    <location>
        <begin position="85"/>
        <end position="91"/>
    </location>
</feature>
<name>RL27_ENTFA</name>
<sequence>MLLTMNLQLFAHKKGGGSTSNGRDSESKRLGAKSADGQTVTGGSILYRQRGTKIYPGVNVGIGGDDTLFAKVDGVVRFERKGRDKKQVSVYPVAN</sequence>
<gene>
    <name evidence="2" type="primary">rpmA</name>
    <name type="ordered locus">EF_0970</name>
</gene>
<comment type="PTM">
    <text evidence="1">The N-terminus is cleaved by ribosomal processing cysteine protease Prp.</text>
</comment>
<comment type="similarity">
    <text evidence="2">Belongs to the bacterial ribosomal protein bL27 family.</text>
</comment>
<evidence type="ECO:0000250" key="1">
    <source>
        <dbReference type="UniProtKB" id="Q2FXT0"/>
    </source>
</evidence>
<evidence type="ECO:0000255" key="2">
    <source>
        <dbReference type="HAMAP-Rule" id="MF_00539"/>
    </source>
</evidence>
<evidence type="ECO:0000256" key="3">
    <source>
        <dbReference type="SAM" id="MobiDB-lite"/>
    </source>
</evidence>
<evidence type="ECO:0000305" key="4"/>
<evidence type="ECO:0007829" key="5">
    <source>
        <dbReference type="PDB" id="6WU9"/>
    </source>
</evidence>
<protein>
    <recommendedName>
        <fullName evidence="2">Large ribosomal subunit protein bL27</fullName>
    </recommendedName>
    <alternativeName>
        <fullName evidence="4">50S ribosomal protein L27</fullName>
    </alternativeName>
</protein>
<keyword id="KW-0002">3D-structure</keyword>
<keyword id="KW-1185">Reference proteome</keyword>
<keyword id="KW-0687">Ribonucleoprotein</keyword>
<keyword id="KW-0689">Ribosomal protein</keyword>
<organism>
    <name type="scientific">Enterococcus faecalis (strain ATCC 700802 / V583)</name>
    <dbReference type="NCBI Taxonomy" id="226185"/>
    <lineage>
        <taxon>Bacteria</taxon>
        <taxon>Bacillati</taxon>
        <taxon>Bacillota</taxon>
        <taxon>Bacilli</taxon>
        <taxon>Lactobacillales</taxon>
        <taxon>Enterococcaceae</taxon>
        <taxon>Enterococcus</taxon>
    </lineage>
</organism>
<accession>Q836X4</accession>
<proteinExistence type="evidence at protein level"/>